<evidence type="ECO:0000305" key="1"/>
<organism>
    <name type="scientific">Staphylococcus epidermidis (strain ATCC 12228 / FDA PCI 1200)</name>
    <dbReference type="NCBI Taxonomy" id="176280"/>
    <lineage>
        <taxon>Bacteria</taxon>
        <taxon>Bacillati</taxon>
        <taxon>Bacillota</taxon>
        <taxon>Bacilli</taxon>
        <taxon>Bacillales</taxon>
        <taxon>Staphylococcaceae</taxon>
        <taxon>Staphylococcus</taxon>
    </lineage>
</organism>
<feature type="chain" id="PRO_0000172808" description="TelA-like protein SE_1089">
    <location>
        <begin position="1"/>
        <end position="376"/>
    </location>
</feature>
<sequence length="376" mass="43420">MVSERSSNQSHPLDYYMNNQSTDHHTIAEDLEIQLTENDKQRIKSISEQIEPLNHEGLLKYGANLQQKMSHFSHQILDDVQSKDMGPVGETLSQLMGKLKSVNPNDINPEKQSRLKRLFKRTKASINEVFSRMQSVSSQIDRITIQLEKHKDQLTKDVEFLDQLYQQNKTYFDNVTLYILAAQKKKKEILTETIPQLREKAHQTGNQMDIQATADMEQFVDRLDKRIYDLQLSRQIAIQTAPQIRMIQNVNQALAEKIQSSILTSIPLWKNQMAIALTLMRQRNAVSAQRSVTDTTNELLTQNASMLKENAIETAAENERGIVDIETLKTTQNDIIETIEQTLQIQEDGRQKRQVAEKELNELEKDLKQHLLAMRK</sequence>
<gene>
    <name type="ordered locus">SE_1089</name>
</gene>
<name>TELL_STAES</name>
<dbReference type="EMBL" id="AE015929">
    <property type="protein sequence ID" value="AAO04686.1"/>
    <property type="molecule type" value="Genomic_DNA"/>
</dbReference>
<dbReference type="RefSeq" id="NP_764644.1">
    <property type="nucleotide sequence ID" value="NC_004461.1"/>
</dbReference>
<dbReference type="RefSeq" id="WP_002485276.1">
    <property type="nucleotide sequence ID" value="NZ_WBME01000002.1"/>
</dbReference>
<dbReference type="SMR" id="Q8CP87"/>
<dbReference type="KEGG" id="sep:SE_1089"/>
<dbReference type="PATRIC" id="fig|176280.10.peg.1065"/>
<dbReference type="eggNOG" id="COG3853">
    <property type="taxonomic scope" value="Bacteria"/>
</dbReference>
<dbReference type="HOGENOM" id="CLU_032111_0_0_9"/>
<dbReference type="OrthoDB" id="9768858at2"/>
<dbReference type="Proteomes" id="UP000001411">
    <property type="component" value="Chromosome"/>
</dbReference>
<dbReference type="InterPro" id="IPR008863">
    <property type="entry name" value="Toxic_anion-R_TelA"/>
</dbReference>
<dbReference type="PANTHER" id="PTHR38432">
    <property type="entry name" value="TELA-LIKE PROTEIN SAOUHSC_01408"/>
    <property type="match status" value="1"/>
</dbReference>
<dbReference type="PANTHER" id="PTHR38432:SF1">
    <property type="entry name" value="TELA-LIKE PROTEIN SAOUHSC_01408"/>
    <property type="match status" value="1"/>
</dbReference>
<dbReference type="Pfam" id="PF05816">
    <property type="entry name" value="TelA"/>
    <property type="match status" value="1"/>
</dbReference>
<dbReference type="PIRSF" id="PIRSF026508">
    <property type="entry name" value="TelA"/>
    <property type="match status" value="1"/>
</dbReference>
<proteinExistence type="inferred from homology"/>
<protein>
    <recommendedName>
        <fullName>TelA-like protein SE_1089</fullName>
    </recommendedName>
</protein>
<comment type="similarity">
    <text evidence="1">Belongs to the TelA family.</text>
</comment>
<accession>Q8CP87</accession>
<reference key="1">
    <citation type="journal article" date="2003" name="Mol. Microbiol.">
        <title>Genome-based analysis of virulence genes in a non-biofilm-forming Staphylococcus epidermidis strain (ATCC 12228).</title>
        <authorList>
            <person name="Zhang Y.-Q."/>
            <person name="Ren S.-X."/>
            <person name="Li H.-L."/>
            <person name="Wang Y.-X."/>
            <person name="Fu G."/>
            <person name="Yang J."/>
            <person name="Qin Z.-Q."/>
            <person name="Miao Y.-G."/>
            <person name="Wang W.-Y."/>
            <person name="Chen R.-S."/>
            <person name="Shen Y."/>
            <person name="Chen Z."/>
            <person name="Yuan Z.-H."/>
            <person name="Zhao G.-P."/>
            <person name="Qu D."/>
            <person name="Danchin A."/>
            <person name="Wen Y.-M."/>
        </authorList>
    </citation>
    <scope>NUCLEOTIDE SEQUENCE [LARGE SCALE GENOMIC DNA]</scope>
    <source>
        <strain>ATCC 12228 / FDA PCI 1200</strain>
    </source>
</reference>